<feature type="chain" id="PRO_0000159503" description="Cysteine--tRNA ligase">
    <location>
        <begin position="1"/>
        <end position="478"/>
    </location>
</feature>
<feature type="short sequence motif" description="'HIGH' region">
    <location>
        <begin position="31"/>
        <end position="41"/>
    </location>
</feature>
<feature type="short sequence motif" description="'KMSKS' region">
    <location>
        <begin position="270"/>
        <end position="274"/>
    </location>
</feature>
<feature type="binding site" evidence="1">
    <location>
        <position position="29"/>
    </location>
    <ligand>
        <name>Zn(2+)</name>
        <dbReference type="ChEBI" id="CHEBI:29105"/>
    </ligand>
</feature>
<feature type="binding site" evidence="1">
    <location>
        <position position="213"/>
    </location>
    <ligand>
        <name>Zn(2+)</name>
        <dbReference type="ChEBI" id="CHEBI:29105"/>
    </ligand>
</feature>
<feature type="binding site" evidence="1">
    <location>
        <position position="238"/>
    </location>
    <ligand>
        <name>Zn(2+)</name>
        <dbReference type="ChEBI" id="CHEBI:29105"/>
    </ligand>
</feature>
<feature type="binding site" evidence="1">
    <location>
        <position position="242"/>
    </location>
    <ligand>
        <name>Zn(2+)</name>
        <dbReference type="ChEBI" id="CHEBI:29105"/>
    </ligand>
</feature>
<feature type="binding site" evidence="1">
    <location>
        <position position="273"/>
    </location>
    <ligand>
        <name>ATP</name>
        <dbReference type="ChEBI" id="CHEBI:30616"/>
    </ligand>
</feature>
<protein>
    <recommendedName>
        <fullName evidence="1">Cysteine--tRNA ligase</fullName>
        <ecNumber evidence="1">6.1.1.16</ecNumber>
    </recommendedName>
    <alternativeName>
        <fullName evidence="1">Cysteinyl-tRNA synthetase</fullName>
        <shortName evidence="1">CysRS</shortName>
    </alternativeName>
</protein>
<sequence>MTLSLYNTLTRQKQRFEPLQAGSVSLYCCGVTVYDYCHLGHARSYIVWDTLRRYLLWLGYRVRYVQNFTDIDDKILRRSRQEGTTMQAIADRYTQAYFEDMARLNILEADDYPRATHTLDGIQRLIAELEDKGFAYAADGDVYFSVRRFQDYGKLSGRKLEDLKAGASGRVESAEESLKHDPFDFALWKAAKPEEPAWDSPWGPGRPGWHIECSAMVRDRLGDSIDIHVGGADLVFPHHENEIAQSEAVTGHPLARYWLHNGMVNVGGEKMSKSLGNFTTIRQLLDEGGISPMVLRLFVLQANYRKPIDFTDEALQACQNGWETLQEGLHFGEHWGDRLGWTESVTVDPDLSDRFRMAMDDDLNTPAALAVLFELAKELRRQQNLLIHEGHLDGDAQQLHQHWVTLVQLAGVLGLEAEPELAETNELDEAAIEDWIAKRHAARQAKDFAEADRIRHYLADLGITLIDQAGGITRWSRT</sequence>
<dbReference type="EC" id="6.1.1.16" evidence="1"/>
<dbReference type="EMBL" id="AP008231">
    <property type="protein sequence ID" value="BAD80616.1"/>
    <property type="molecule type" value="Genomic_DNA"/>
</dbReference>
<dbReference type="RefSeq" id="WP_011244736.1">
    <property type="nucleotide sequence ID" value="NZ_CP085785.1"/>
</dbReference>
<dbReference type="SMR" id="Q5MZA4"/>
<dbReference type="GeneID" id="72430532"/>
<dbReference type="KEGG" id="syc:syc2426_d"/>
<dbReference type="eggNOG" id="COG0215">
    <property type="taxonomic scope" value="Bacteria"/>
</dbReference>
<dbReference type="Proteomes" id="UP000001175">
    <property type="component" value="Chromosome"/>
</dbReference>
<dbReference type="GO" id="GO:0005829">
    <property type="term" value="C:cytosol"/>
    <property type="evidence" value="ECO:0007669"/>
    <property type="project" value="TreeGrafter"/>
</dbReference>
<dbReference type="GO" id="GO:0005524">
    <property type="term" value="F:ATP binding"/>
    <property type="evidence" value="ECO:0007669"/>
    <property type="project" value="UniProtKB-UniRule"/>
</dbReference>
<dbReference type="GO" id="GO:0004817">
    <property type="term" value="F:cysteine-tRNA ligase activity"/>
    <property type="evidence" value="ECO:0007669"/>
    <property type="project" value="UniProtKB-UniRule"/>
</dbReference>
<dbReference type="GO" id="GO:0008270">
    <property type="term" value="F:zinc ion binding"/>
    <property type="evidence" value="ECO:0007669"/>
    <property type="project" value="UniProtKB-UniRule"/>
</dbReference>
<dbReference type="GO" id="GO:0006423">
    <property type="term" value="P:cysteinyl-tRNA aminoacylation"/>
    <property type="evidence" value="ECO:0007669"/>
    <property type="project" value="UniProtKB-UniRule"/>
</dbReference>
<dbReference type="CDD" id="cd00672">
    <property type="entry name" value="CysRS_core"/>
    <property type="match status" value="1"/>
</dbReference>
<dbReference type="FunFam" id="3.40.50.620:FF:000009">
    <property type="entry name" value="Cysteine--tRNA ligase"/>
    <property type="match status" value="1"/>
</dbReference>
<dbReference type="Gene3D" id="1.20.120.1910">
    <property type="entry name" value="Cysteine-tRNA ligase, C-terminal anti-codon recognition domain"/>
    <property type="match status" value="1"/>
</dbReference>
<dbReference type="Gene3D" id="3.40.50.620">
    <property type="entry name" value="HUPs"/>
    <property type="match status" value="1"/>
</dbReference>
<dbReference type="HAMAP" id="MF_00041">
    <property type="entry name" value="Cys_tRNA_synth"/>
    <property type="match status" value="1"/>
</dbReference>
<dbReference type="InterPro" id="IPR015803">
    <property type="entry name" value="Cys-tRNA-ligase"/>
</dbReference>
<dbReference type="InterPro" id="IPR015273">
    <property type="entry name" value="Cys-tRNA-synt_Ia_DALR"/>
</dbReference>
<dbReference type="InterPro" id="IPR024909">
    <property type="entry name" value="Cys-tRNA/MSH_ligase"/>
</dbReference>
<dbReference type="InterPro" id="IPR014729">
    <property type="entry name" value="Rossmann-like_a/b/a_fold"/>
</dbReference>
<dbReference type="InterPro" id="IPR032678">
    <property type="entry name" value="tRNA-synt_1_cat_dom"/>
</dbReference>
<dbReference type="InterPro" id="IPR009080">
    <property type="entry name" value="tRNAsynth_Ia_anticodon-bd"/>
</dbReference>
<dbReference type="NCBIfam" id="TIGR00435">
    <property type="entry name" value="cysS"/>
    <property type="match status" value="1"/>
</dbReference>
<dbReference type="PANTHER" id="PTHR10890:SF3">
    <property type="entry name" value="CYSTEINE--TRNA LIGASE, CYTOPLASMIC"/>
    <property type="match status" value="1"/>
</dbReference>
<dbReference type="PANTHER" id="PTHR10890">
    <property type="entry name" value="CYSTEINYL-TRNA SYNTHETASE"/>
    <property type="match status" value="1"/>
</dbReference>
<dbReference type="Pfam" id="PF09190">
    <property type="entry name" value="DALR_2"/>
    <property type="match status" value="1"/>
</dbReference>
<dbReference type="Pfam" id="PF01406">
    <property type="entry name" value="tRNA-synt_1e"/>
    <property type="match status" value="1"/>
</dbReference>
<dbReference type="PRINTS" id="PR00983">
    <property type="entry name" value="TRNASYNTHCYS"/>
</dbReference>
<dbReference type="SMART" id="SM00840">
    <property type="entry name" value="DALR_2"/>
    <property type="match status" value="1"/>
</dbReference>
<dbReference type="SUPFAM" id="SSF47323">
    <property type="entry name" value="Anticodon-binding domain of a subclass of class I aminoacyl-tRNA synthetases"/>
    <property type="match status" value="1"/>
</dbReference>
<dbReference type="SUPFAM" id="SSF52374">
    <property type="entry name" value="Nucleotidylyl transferase"/>
    <property type="match status" value="1"/>
</dbReference>
<keyword id="KW-0030">Aminoacyl-tRNA synthetase</keyword>
<keyword id="KW-0067">ATP-binding</keyword>
<keyword id="KW-0963">Cytoplasm</keyword>
<keyword id="KW-0436">Ligase</keyword>
<keyword id="KW-0479">Metal-binding</keyword>
<keyword id="KW-0547">Nucleotide-binding</keyword>
<keyword id="KW-0648">Protein biosynthesis</keyword>
<keyword id="KW-0862">Zinc</keyword>
<organism>
    <name type="scientific">Synechococcus sp. (strain ATCC 27144 / PCC 6301 / SAUG 1402/1)</name>
    <name type="common">Anacystis nidulans</name>
    <dbReference type="NCBI Taxonomy" id="269084"/>
    <lineage>
        <taxon>Bacteria</taxon>
        <taxon>Bacillati</taxon>
        <taxon>Cyanobacteriota</taxon>
        <taxon>Cyanophyceae</taxon>
        <taxon>Synechococcales</taxon>
        <taxon>Synechococcaceae</taxon>
        <taxon>Synechococcus</taxon>
    </lineage>
</organism>
<evidence type="ECO:0000255" key="1">
    <source>
        <dbReference type="HAMAP-Rule" id="MF_00041"/>
    </source>
</evidence>
<gene>
    <name evidence="1" type="primary">cysS</name>
    <name type="ordered locus">syc2426_d</name>
</gene>
<comment type="catalytic activity">
    <reaction evidence="1">
        <text>tRNA(Cys) + L-cysteine + ATP = L-cysteinyl-tRNA(Cys) + AMP + diphosphate</text>
        <dbReference type="Rhea" id="RHEA:17773"/>
        <dbReference type="Rhea" id="RHEA-COMP:9661"/>
        <dbReference type="Rhea" id="RHEA-COMP:9679"/>
        <dbReference type="ChEBI" id="CHEBI:30616"/>
        <dbReference type="ChEBI" id="CHEBI:33019"/>
        <dbReference type="ChEBI" id="CHEBI:35235"/>
        <dbReference type="ChEBI" id="CHEBI:78442"/>
        <dbReference type="ChEBI" id="CHEBI:78517"/>
        <dbReference type="ChEBI" id="CHEBI:456215"/>
        <dbReference type="EC" id="6.1.1.16"/>
    </reaction>
</comment>
<comment type="cofactor">
    <cofactor evidence="1">
        <name>Zn(2+)</name>
        <dbReference type="ChEBI" id="CHEBI:29105"/>
    </cofactor>
    <text evidence="1">Binds 1 zinc ion per subunit.</text>
</comment>
<comment type="subunit">
    <text evidence="1">Monomer.</text>
</comment>
<comment type="subcellular location">
    <subcellularLocation>
        <location evidence="1">Cytoplasm</location>
    </subcellularLocation>
</comment>
<comment type="similarity">
    <text evidence="1">Belongs to the class-I aminoacyl-tRNA synthetase family.</text>
</comment>
<name>SYC_SYNP6</name>
<proteinExistence type="inferred from homology"/>
<reference key="1">
    <citation type="journal article" date="2007" name="Photosyn. Res.">
        <title>Complete nucleotide sequence of the freshwater unicellular cyanobacterium Synechococcus elongatus PCC 6301 chromosome: gene content and organization.</title>
        <authorList>
            <person name="Sugita C."/>
            <person name="Ogata K."/>
            <person name="Shikata M."/>
            <person name="Jikuya H."/>
            <person name="Takano J."/>
            <person name="Furumichi M."/>
            <person name="Kanehisa M."/>
            <person name="Omata T."/>
            <person name="Sugiura M."/>
            <person name="Sugita M."/>
        </authorList>
    </citation>
    <scope>NUCLEOTIDE SEQUENCE [LARGE SCALE GENOMIC DNA]</scope>
    <source>
        <strain>ATCC 27144 / PCC 6301 / SAUG 1402/1</strain>
    </source>
</reference>
<accession>Q5MZA4</accession>